<proteinExistence type="inferred from homology"/>
<gene>
    <name evidence="1" type="primary">nagB</name>
    <name type="ordered locus">Bcer98_2753</name>
</gene>
<protein>
    <recommendedName>
        <fullName evidence="1">Glucosamine-6-phosphate deaminase</fullName>
        <ecNumber evidence="1">3.5.99.6</ecNumber>
    </recommendedName>
    <alternativeName>
        <fullName evidence="1">GlcN6P deaminase</fullName>
        <shortName evidence="1">GNPDA</shortName>
    </alternativeName>
    <alternativeName>
        <fullName evidence="1">Glucosamine-6-phosphate isomerase</fullName>
    </alternativeName>
</protein>
<feature type="chain" id="PRO_1000085746" description="Glucosamine-6-phosphate deaminase">
    <location>
        <begin position="1"/>
        <end position="262"/>
    </location>
</feature>
<feature type="active site" description="Proton acceptor; for enolization step" evidence="1">
    <location>
        <position position="63"/>
    </location>
</feature>
<feature type="active site" description="For ring-opening step" evidence="1">
    <location>
        <position position="129"/>
    </location>
</feature>
<feature type="active site" description="Proton acceptor; for ring-opening step" evidence="1">
    <location>
        <position position="131"/>
    </location>
</feature>
<feature type="active site" description="For ring-opening step" evidence="1">
    <location>
        <position position="136"/>
    </location>
</feature>
<evidence type="ECO:0000255" key="1">
    <source>
        <dbReference type="HAMAP-Rule" id="MF_01241"/>
    </source>
</evidence>
<organism>
    <name type="scientific">Bacillus cytotoxicus (strain DSM 22905 / CIP 110041 / 391-98 / NVH 391-98)</name>
    <dbReference type="NCBI Taxonomy" id="315749"/>
    <lineage>
        <taxon>Bacteria</taxon>
        <taxon>Bacillati</taxon>
        <taxon>Bacillota</taxon>
        <taxon>Bacilli</taxon>
        <taxon>Bacillales</taxon>
        <taxon>Bacillaceae</taxon>
        <taxon>Bacillus</taxon>
        <taxon>Bacillus cereus group</taxon>
    </lineage>
</organism>
<accession>A7GS78</accession>
<name>NAGB_BACCN</name>
<dbReference type="EC" id="3.5.99.6" evidence="1"/>
<dbReference type="EMBL" id="CP000764">
    <property type="protein sequence ID" value="ABS22986.1"/>
    <property type="molecule type" value="Genomic_DNA"/>
</dbReference>
<dbReference type="RefSeq" id="WP_012095210.1">
    <property type="nucleotide sequence ID" value="NC_009674.1"/>
</dbReference>
<dbReference type="SMR" id="A7GS78"/>
<dbReference type="STRING" id="315749.Bcer98_2753"/>
<dbReference type="GeneID" id="33898007"/>
<dbReference type="KEGG" id="bcy:Bcer98_2753"/>
<dbReference type="eggNOG" id="COG0363">
    <property type="taxonomic scope" value="Bacteria"/>
</dbReference>
<dbReference type="HOGENOM" id="CLU_049611_1_0_9"/>
<dbReference type="OrthoDB" id="9791139at2"/>
<dbReference type="UniPathway" id="UPA00629">
    <property type="reaction ID" value="UER00684"/>
</dbReference>
<dbReference type="Proteomes" id="UP000002300">
    <property type="component" value="Chromosome"/>
</dbReference>
<dbReference type="GO" id="GO:0005737">
    <property type="term" value="C:cytoplasm"/>
    <property type="evidence" value="ECO:0007669"/>
    <property type="project" value="TreeGrafter"/>
</dbReference>
<dbReference type="GO" id="GO:0004342">
    <property type="term" value="F:glucosamine-6-phosphate deaminase activity"/>
    <property type="evidence" value="ECO:0007669"/>
    <property type="project" value="UniProtKB-UniRule"/>
</dbReference>
<dbReference type="GO" id="GO:0042802">
    <property type="term" value="F:identical protein binding"/>
    <property type="evidence" value="ECO:0007669"/>
    <property type="project" value="TreeGrafter"/>
</dbReference>
<dbReference type="GO" id="GO:0005975">
    <property type="term" value="P:carbohydrate metabolic process"/>
    <property type="evidence" value="ECO:0007669"/>
    <property type="project" value="InterPro"/>
</dbReference>
<dbReference type="GO" id="GO:0006043">
    <property type="term" value="P:glucosamine catabolic process"/>
    <property type="evidence" value="ECO:0007669"/>
    <property type="project" value="TreeGrafter"/>
</dbReference>
<dbReference type="GO" id="GO:0006046">
    <property type="term" value="P:N-acetylglucosamine catabolic process"/>
    <property type="evidence" value="ECO:0007669"/>
    <property type="project" value="TreeGrafter"/>
</dbReference>
<dbReference type="GO" id="GO:0019262">
    <property type="term" value="P:N-acetylneuraminate catabolic process"/>
    <property type="evidence" value="ECO:0007669"/>
    <property type="project" value="UniProtKB-UniRule"/>
</dbReference>
<dbReference type="CDD" id="cd01399">
    <property type="entry name" value="GlcN6P_deaminase"/>
    <property type="match status" value="1"/>
</dbReference>
<dbReference type="FunFam" id="3.40.50.1360:FF:000003">
    <property type="entry name" value="Glucosamine-6-phosphate deaminase"/>
    <property type="match status" value="1"/>
</dbReference>
<dbReference type="Gene3D" id="3.40.50.1360">
    <property type="match status" value="1"/>
</dbReference>
<dbReference type="HAMAP" id="MF_01241">
    <property type="entry name" value="GlcN6P_deamin"/>
    <property type="match status" value="1"/>
</dbReference>
<dbReference type="InterPro" id="IPR006148">
    <property type="entry name" value="Glc/Gal-6P_isomerase"/>
</dbReference>
<dbReference type="InterPro" id="IPR004547">
    <property type="entry name" value="Glucosamine6P_isomerase"/>
</dbReference>
<dbReference type="InterPro" id="IPR018321">
    <property type="entry name" value="Glucosamine6P_isomerase_CS"/>
</dbReference>
<dbReference type="InterPro" id="IPR037171">
    <property type="entry name" value="NagB/RpiA_transferase-like"/>
</dbReference>
<dbReference type="NCBIfam" id="TIGR00502">
    <property type="entry name" value="nagB"/>
    <property type="match status" value="1"/>
</dbReference>
<dbReference type="NCBIfam" id="NF001682">
    <property type="entry name" value="PRK00443.1-1"/>
    <property type="match status" value="1"/>
</dbReference>
<dbReference type="PANTHER" id="PTHR11280">
    <property type="entry name" value="GLUCOSAMINE-6-PHOSPHATE ISOMERASE"/>
    <property type="match status" value="1"/>
</dbReference>
<dbReference type="PANTHER" id="PTHR11280:SF5">
    <property type="entry name" value="GLUCOSAMINE-6-PHOSPHATE ISOMERASE"/>
    <property type="match status" value="1"/>
</dbReference>
<dbReference type="Pfam" id="PF01182">
    <property type="entry name" value="Glucosamine_iso"/>
    <property type="match status" value="1"/>
</dbReference>
<dbReference type="SUPFAM" id="SSF100950">
    <property type="entry name" value="NagB/RpiA/CoA transferase-like"/>
    <property type="match status" value="1"/>
</dbReference>
<dbReference type="PROSITE" id="PS01161">
    <property type="entry name" value="GLC_GALNAC_ISOMERASE"/>
    <property type="match status" value="1"/>
</dbReference>
<comment type="function">
    <text evidence="1">Catalyzes the reversible isomerization-deamination of glucosamine 6-phosphate (GlcN6P) to form fructose 6-phosphate (Fru6P) and ammonium ion.</text>
</comment>
<comment type="catalytic activity">
    <reaction evidence="1">
        <text>alpha-D-glucosamine 6-phosphate + H2O = beta-D-fructose 6-phosphate + NH4(+)</text>
        <dbReference type="Rhea" id="RHEA:12172"/>
        <dbReference type="ChEBI" id="CHEBI:15377"/>
        <dbReference type="ChEBI" id="CHEBI:28938"/>
        <dbReference type="ChEBI" id="CHEBI:57634"/>
        <dbReference type="ChEBI" id="CHEBI:75989"/>
        <dbReference type="EC" id="3.5.99.6"/>
    </reaction>
</comment>
<comment type="pathway">
    <text evidence="1">Amino-sugar metabolism; N-acetylneuraminate degradation; D-fructose 6-phosphate from N-acetylneuraminate: step 5/5.</text>
</comment>
<comment type="similarity">
    <text evidence="1">Belongs to the glucosamine/galactosamine-6-phosphate isomerase family. NagB subfamily.</text>
</comment>
<keyword id="KW-0119">Carbohydrate metabolism</keyword>
<keyword id="KW-0378">Hydrolase</keyword>
<sequence>MNILVVESQEKLAEAGYKLIENVVKSKGNPTLGMATGSSPLGIYAEIRKNKLDTSHVTTVNLDEYVNLPHEDKNSYHYFMKEQLFDHLPFKATYVPNGMANDLEEECNRYEGILAANPVDLQILGIGENGHIGFNEPGTPFHSRTHIVELTESTRQANRRFFEKEEDVPTHAITMGIGSIMKAKQILLVAMGPKKAEAVKELLQGEYSEACPATVLQRHPNVTVIADQEALSLCSEAIADEHRQVFTISDLLSDSRVGETAN</sequence>
<reference key="1">
    <citation type="journal article" date="2008" name="Chem. Biol. Interact.">
        <title>Extending the Bacillus cereus group genomics to putative food-borne pathogens of different toxicity.</title>
        <authorList>
            <person name="Lapidus A."/>
            <person name="Goltsman E."/>
            <person name="Auger S."/>
            <person name="Galleron N."/>
            <person name="Segurens B."/>
            <person name="Dossat C."/>
            <person name="Land M.L."/>
            <person name="Broussolle V."/>
            <person name="Brillard J."/>
            <person name="Guinebretiere M.-H."/>
            <person name="Sanchis V."/>
            <person name="Nguen-the C."/>
            <person name="Lereclus D."/>
            <person name="Richardson P."/>
            <person name="Wincker P."/>
            <person name="Weissenbach J."/>
            <person name="Ehrlich S.D."/>
            <person name="Sorokin A."/>
        </authorList>
    </citation>
    <scope>NUCLEOTIDE SEQUENCE [LARGE SCALE GENOMIC DNA]</scope>
    <source>
        <strain>DSM 22905 / CIP 110041 / 391-98 / NVH 391-98</strain>
    </source>
</reference>